<organism>
    <name type="scientific">Gluconobacter oxydans (strain 621H)</name>
    <name type="common">Gluconobacter suboxydans</name>
    <dbReference type="NCBI Taxonomy" id="290633"/>
    <lineage>
        <taxon>Bacteria</taxon>
        <taxon>Pseudomonadati</taxon>
        <taxon>Pseudomonadota</taxon>
        <taxon>Alphaproteobacteria</taxon>
        <taxon>Acetobacterales</taxon>
        <taxon>Acetobacteraceae</taxon>
        <taxon>Gluconobacter</taxon>
    </lineage>
</organism>
<proteinExistence type="inferred from homology"/>
<accession>Q5FNN2</accession>
<feature type="chain" id="PRO_0000266128" description="CTP synthase">
    <location>
        <begin position="1"/>
        <end position="543"/>
    </location>
</feature>
<feature type="domain" description="Glutamine amidotransferase type-1" evidence="1">
    <location>
        <begin position="291"/>
        <end position="542"/>
    </location>
</feature>
<feature type="region of interest" description="Amidoligase domain" evidence="1">
    <location>
        <begin position="1"/>
        <end position="265"/>
    </location>
</feature>
<feature type="active site" description="Nucleophile; for glutamine hydrolysis" evidence="1">
    <location>
        <position position="381"/>
    </location>
</feature>
<feature type="active site" evidence="1">
    <location>
        <position position="515"/>
    </location>
</feature>
<feature type="active site" evidence="1">
    <location>
        <position position="517"/>
    </location>
</feature>
<feature type="binding site" evidence="1">
    <location>
        <position position="13"/>
    </location>
    <ligand>
        <name>CTP</name>
        <dbReference type="ChEBI" id="CHEBI:37563"/>
        <note>allosteric inhibitor</note>
    </ligand>
</feature>
<feature type="binding site" evidence="1">
    <location>
        <position position="13"/>
    </location>
    <ligand>
        <name>UTP</name>
        <dbReference type="ChEBI" id="CHEBI:46398"/>
    </ligand>
</feature>
<feature type="binding site" evidence="1">
    <location>
        <begin position="14"/>
        <end position="19"/>
    </location>
    <ligand>
        <name>ATP</name>
        <dbReference type="ChEBI" id="CHEBI:30616"/>
    </ligand>
</feature>
<feature type="binding site" evidence="1">
    <location>
        <position position="54"/>
    </location>
    <ligand>
        <name>L-glutamine</name>
        <dbReference type="ChEBI" id="CHEBI:58359"/>
    </ligand>
</feature>
<feature type="binding site" evidence="1">
    <location>
        <position position="71"/>
    </location>
    <ligand>
        <name>ATP</name>
        <dbReference type="ChEBI" id="CHEBI:30616"/>
    </ligand>
</feature>
<feature type="binding site" evidence="1">
    <location>
        <position position="71"/>
    </location>
    <ligand>
        <name>Mg(2+)</name>
        <dbReference type="ChEBI" id="CHEBI:18420"/>
    </ligand>
</feature>
<feature type="binding site" evidence="1">
    <location>
        <position position="139"/>
    </location>
    <ligand>
        <name>Mg(2+)</name>
        <dbReference type="ChEBI" id="CHEBI:18420"/>
    </ligand>
</feature>
<feature type="binding site" evidence="1">
    <location>
        <begin position="146"/>
        <end position="148"/>
    </location>
    <ligand>
        <name>CTP</name>
        <dbReference type="ChEBI" id="CHEBI:37563"/>
        <note>allosteric inhibitor</note>
    </ligand>
</feature>
<feature type="binding site" evidence="1">
    <location>
        <begin position="186"/>
        <end position="191"/>
    </location>
    <ligand>
        <name>CTP</name>
        <dbReference type="ChEBI" id="CHEBI:37563"/>
        <note>allosteric inhibitor</note>
    </ligand>
</feature>
<feature type="binding site" evidence="1">
    <location>
        <begin position="186"/>
        <end position="191"/>
    </location>
    <ligand>
        <name>UTP</name>
        <dbReference type="ChEBI" id="CHEBI:46398"/>
    </ligand>
</feature>
<feature type="binding site" evidence="1">
    <location>
        <position position="222"/>
    </location>
    <ligand>
        <name>CTP</name>
        <dbReference type="ChEBI" id="CHEBI:37563"/>
        <note>allosteric inhibitor</note>
    </ligand>
</feature>
<feature type="binding site" evidence="1">
    <location>
        <position position="222"/>
    </location>
    <ligand>
        <name>UTP</name>
        <dbReference type="ChEBI" id="CHEBI:46398"/>
    </ligand>
</feature>
<feature type="binding site" evidence="1">
    <location>
        <position position="354"/>
    </location>
    <ligand>
        <name>L-glutamine</name>
        <dbReference type="ChEBI" id="CHEBI:58359"/>
    </ligand>
</feature>
<feature type="binding site" evidence="1">
    <location>
        <begin position="382"/>
        <end position="385"/>
    </location>
    <ligand>
        <name>L-glutamine</name>
        <dbReference type="ChEBI" id="CHEBI:58359"/>
    </ligand>
</feature>
<feature type="binding site" evidence="1">
    <location>
        <position position="405"/>
    </location>
    <ligand>
        <name>L-glutamine</name>
        <dbReference type="ChEBI" id="CHEBI:58359"/>
    </ligand>
</feature>
<feature type="binding site" evidence="1">
    <location>
        <position position="470"/>
    </location>
    <ligand>
        <name>L-glutamine</name>
        <dbReference type="ChEBI" id="CHEBI:58359"/>
    </ligand>
</feature>
<evidence type="ECO:0000255" key="1">
    <source>
        <dbReference type="HAMAP-Rule" id="MF_01227"/>
    </source>
</evidence>
<gene>
    <name evidence="1" type="primary">pyrG</name>
    <name type="ordered locus">GOX2282</name>
</gene>
<comment type="function">
    <text evidence="1">Catalyzes the ATP-dependent amination of UTP to CTP with either L-glutamine or ammonia as the source of nitrogen. Regulates intracellular CTP levels through interactions with the four ribonucleotide triphosphates.</text>
</comment>
<comment type="catalytic activity">
    <reaction evidence="1">
        <text>UTP + L-glutamine + ATP + H2O = CTP + L-glutamate + ADP + phosphate + 2 H(+)</text>
        <dbReference type="Rhea" id="RHEA:26426"/>
        <dbReference type="ChEBI" id="CHEBI:15377"/>
        <dbReference type="ChEBI" id="CHEBI:15378"/>
        <dbReference type="ChEBI" id="CHEBI:29985"/>
        <dbReference type="ChEBI" id="CHEBI:30616"/>
        <dbReference type="ChEBI" id="CHEBI:37563"/>
        <dbReference type="ChEBI" id="CHEBI:43474"/>
        <dbReference type="ChEBI" id="CHEBI:46398"/>
        <dbReference type="ChEBI" id="CHEBI:58359"/>
        <dbReference type="ChEBI" id="CHEBI:456216"/>
        <dbReference type="EC" id="6.3.4.2"/>
    </reaction>
</comment>
<comment type="catalytic activity">
    <reaction evidence="1">
        <text>L-glutamine + H2O = L-glutamate + NH4(+)</text>
        <dbReference type="Rhea" id="RHEA:15889"/>
        <dbReference type="ChEBI" id="CHEBI:15377"/>
        <dbReference type="ChEBI" id="CHEBI:28938"/>
        <dbReference type="ChEBI" id="CHEBI:29985"/>
        <dbReference type="ChEBI" id="CHEBI:58359"/>
    </reaction>
</comment>
<comment type="catalytic activity">
    <reaction evidence="1">
        <text>UTP + NH4(+) + ATP = CTP + ADP + phosphate + 2 H(+)</text>
        <dbReference type="Rhea" id="RHEA:16597"/>
        <dbReference type="ChEBI" id="CHEBI:15378"/>
        <dbReference type="ChEBI" id="CHEBI:28938"/>
        <dbReference type="ChEBI" id="CHEBI:30616"/>
        <dbReference type="ChEBI" id="CHEBI:37563"/>
        <dbReference type="ChEBI" id="CHEBI:43474"/>
        <dbReference type="ChEBI" id="CHEBI:46398"/>
        <dbReference type="ChEBI" id="CHEBI:456216"/>
    </reaction>
</comment>
<comment type="activity regulation">
    <text evidence="1">Allosterically activated by GTP, when glutamine is the substrate; GTP has no effect on the reaction when ammonia is the substrate. The allosteric effector GTP functions by stabilizing the protein conformation that binds the tetrahedral intermediate(s) formed during glutamine hydrolysis. Inhibited by the product CTP, via allosteric rather than competitive inhibition.</text>
</comment>
<comment type="pathway">
    <text evidence="1">Pyrimidine metabolism; CTP biosynthesis via de novo pathway; CTP from UDP: step 2/2.</text>
</comment>
<comment type="subunit">
    <text evidence="1">Homotetramer.</text>
</comment>
<comment type="miscellaneous">
    <text evidence="1">CTPSs have evolved a hybrid strategy for distinguishing between UTP and CTP. The overlapping regions of the product feedback inhibitory and substrate sites recognize a common feature in both compounds, the triphosphate moiety. To differentiate isosteric substrate and product pyrimidine rings, an additional pocket far from the expected kinase/ligase catalytic site, specifically recognizes the cytosine and ribose portions of the product inhibitor.</text>
</comment>
<comment type="similarity">
    <text evidence="1">Belongs to the CTP synthase family.</text>
</comment>
<sequence>MTRFVFITGGVVSSLGKGIASAALAALLQARGYKVRMRKLDPYLNVDPGTMSPYQHGEVFITDDGAETDLDLGHYERFTGVHASRADNTTTGRIYSDVIARERRGDYLGGTVQVIPHITDAIKDVVVTGTDDYDFVLVEIGGTVGDIESLPFLEAIRQLRNDLGHAQTMCVHLTLLPYIPAAGELKTKPTQHSVKELQNVGIQPQMLLCRSDRPIPDNERRKIANFCNVRPEAVIAALDVDTIYACPISYHNEGMDQEVLRYFDLPYDSKPDLSRWEKIVHAIREPEGEVRVAIVGKYTALLDSYKSLAEALLHGGIANHVKVKLDWIESEEFEKNGNIAERLKDADAILVPGGFGERGAEGKIQAVRYAREHNIPFLGICFGMQMAVIECARSLAGLPKASSTEFGPTDEPLVGLMTEWARGSEMLRRREGGDLGGTMRLGAYPAKLVPGSRVAEIYGRTEIRERHRHRWEVNAHYKDRLEKTGLRFSGLSPDGVLPEVVEYPDHAWFVAVQYHPELLSKPFDPHPLFAGFIAAAVKEAHRK</sequence>
<keyword id="KW-0067">ATP-binding</keyword>
<keyword id="KW-0315">Glutamine amidotransferase</keyword>
<keyword id="KW-0436">Ligase</keyword>
<keyword id="KW-0460">Magnesium</keyword>
<keyword id="KW-0479">Metal-binding</keyword>
<keyword id="KW-0547">Nucleotide-binding</keyword>
<keyword id="KW-0665">Pyrimidine biosynthesis</keyword>
<keyword id="KW-1185">Reference proteome</keyword>
<reference key="1">
    <citation type="journal article" date="2005" name="Nat. Biotechnol.">
        <title>Complete genome sequence of the acetic acid bacterium Gluconobacter oxydans.</title>
        <authorList>
            <person name="Prust C."/>
            <person name="Hoffmeister M."/>
            <person name="Liesegang H."/>
            <person name="Wiezer A."/>
            <person name="Fricke W.F."/>
            <person name="Ehrenreich A."/>
            <person name="Gottschalk G."/>
            <person name="Deppenmeier U."/>
        </authorList>
    </citation>
    <scope>NUCLEOTIDE SEQUENCE [LARGE SCALE GENOMIC DNA]</scope>
    <source>
        <strain>621H</strain>
    </source>
</reference>
<name>PYRG_GLUOX</name>
<dbReference type="EC" id="6.3.4.2" evidence="1"/>
<dbReference type="EMBL" id="CP000009">
    <property type="protein sequence ID" value="AAW62015.1"/>
    <property type="molecule type" value="Genomic_DNA"/>
</dbReference>
<dbReference type="RefSeq" id="WP_011253785.1">
    <property type="nucleotide sequence ID" value="NZ_LT900338.1"/>
</dbReference>
<dbReference type="SMR" id="Q5FNN2"/>
<dbReference type="STRING" id="290633.GOX2282"/>
<dbReference type="KEGG" id="gox:GOX2282"/>
<dbReference type="eggNOG" id="COG0504">
    <property type="taxonomic scope" value="Bacteria"/>
</dbReference>
<dbReference type="HOGENOM" id="CLU_011675_5_0_5"/>
<dbReference type="UniPathway" id="UPA00159">
    <property type="reaction ID" value="UER00277"/>
</dbReference>
<dbReference type="Proteomes" id="UP000006375">
    <property type="component" value="Chromosome"/>
</dbReference>
<dbReference type="GO" id="GO:0005829">
    <property type="term" value="C:cytosol"/>
    <property type="evidence" value="ECO:0007669"/>
    <property type="project" value="TreeGrafter"/>
</dbReference>
<dbReference type="GO" id="GO:0005524">
    <property type="term" value="F:ATP binding"/>
    <property type="evidence" value="ECO:0007669"/>
    <property type="project" value="UniProtKB-KW"/>
</dbReference>
<dbReference type="GO" id="GO:0003883">
    <property type="term" value="F:CTP synthase activity"/>
    <property type="evidence" value="ECO:0007669"/>
    <property type="project" value="UniProtKB-UniRule"/>
</dbReference>
<dbReference type="GO" id="GO:0004359">
    <property type="term" value="F:glutaminase activity"/>
    <property type="evidence" value="ECO:0007669"/>
    <property type="project" value="RHEA"/>
</dbReference>
<dbReference type="GO" id="GO:0042802">
    <property type="term" value="F:identical protein binding"/>
    <property type="evidence" value="ECO:0007669"/>
    <property type="project" value="TreeGrafter"/>
</dbReference>
<dbReference type="GO" id="GO:0046872">
    <property type="term" value="F:metal ion binding"/>
    <property type="evidence" value="ECO:0007669"/>
    <property type="project" value="UniProtKB-KW"/>
</dbReference>
<dbReference type="GO" id="GO:0044210">
    <property type="term" value="P:'de novo' CTP biosynthetic process"/>
    <property type="evidence" value="ECO:0007669"/>
    <property type="project" value="UniProtKB-UniRule"/>
</dbReference>
<dbReference type="GO" id="GO:0019856">
    <property type="term" value="P:pyrimidine nucleobase biosynthetic process"/>
    <property type="evidence" value="ECO:0007669"/>
    <property type="project" value="TreeGrafter"/>
</dbReference>
<dbReference type="CDD" id="cd03113">
    <property type="entry name" value="CTPS_N"/>
    <property type="match status" value="1"/>
</dbReference>
<dbReference type="CDD" id="cd01746">
    <property type="entry name" value="GATase1_CTP_Synthase"/>
    <property type="match status" value="1"/>
</dbReference>
<dbReference type="FunFam" id="3.40.50.300:FF:000009">
    <property type="entry name" value="CTP synthase"/>
    <property type="match status" value="1"/>
</dbReference>
<dbReference type="FunFam" id="3.40.50.880:FF:000002">
    <property type="entry name" value="CTP synthase"/>
    <property type="match status" value="1"/>
</dbReference>
<dbReference type="Gene3D" id="3.40.50.880">
    <property type="match status" value="1"/>
</dbReference>
<dbReference type="Gene3D" id="3.40.50.300">
    <property type="entry name" value="P-loop containing nucleotide triphosphate hydrolases"/>
    <property type="match status" value="1"/>
</dbReference>
<dbReference type="HAMAP" id="MF_01227">
    <property type="entry name" value="PyrG"/>
    <property type="match status" value="1"/>
</dbReference>
<dbReference type="InterPro" id="IPR029062">
    <property type="entry name" value="Class_I_gatase-like"/>
</dbReference>
<dbReference type="InterPro" id="IPR004468">
    <property type="entry name" value="CTP_synthase"/>
</dbReference>
<dbReference type="InterPro" id="IPR017456">
    <property type="entry name" value="CTP_synthase_N"/>
</dbReference>
<dbReference type="InterPro" id="IPR017926">
    <property type="entry name" value="GATASE"/>
</dbReference>
<dbReference type="InterPro" id="IPR033828">
    <property type="entry name" value="GATase1_CTP_Synthase"/>
</dbReference>
<dbReference type="InterPro" id="IPR027417">
    <property type="entry name" value="P-loop_NTPase"/>
</dbReference>
<dbReference type="NCBIfam" id="NF003792">
    <property type="entry name" value="PRK05380.1"/>
    <property type="match status" value="1"/>
</dbReference>
<dbReference type="NCBIfam" id="TIGR00337">
    <property type="entry name" value="PyrG"/>
    <property type="match status" value="1"/>
</dbReference>
<dbReference type="PANTHER" id="PTHR11550">
    <property type="entry name" value="CTP SYNTHASE"/>
    <property type="match status" value="1"/>
</dbReference>
<dbReference type="PANTHER" id="PTHR11550:SF0">
    <property type="entry name" value="CTP SYNTHASE-RELATED"/>
    <property type="match status" value="1"/>
</dbReference>
<dbReference type="Pfam" id="PF06418">
    <property type="entry name" value="CTP_synth_N"/>
    <property type="match status" value="1"/>
</dbReference>
<dbReference type="Pfam" id="PF00117">
    <property type="entry name" value="GATase"/>
    <property type="match status" value="1"/>
</dbReference>
<dbReference type="SUPFAM" id="SSF52317">
    <property type="entry name" value="Class I glutamine amidotransferase-like"/>
    <property type="match status" value="1"/>
</dbReference>
<dbReference type="SUPFAM" id="SSF52540">
    <property type="entry name" value="P-loop containing nucleoside triphosphate hydrolases"/>
    <property type="match status" value="1"/>
</dbReference>
<dbReference type="PROSITE" id="PS51273">
    <property type="entry name" value="GATASE_TYPE_1"/>
    <property type="match status" value="1"/>
</dbReference>
<protein>
    <recommendedName>
        <fullName evidence="1">CTP synthase</fullName>
        <ecNumber evidence="1">6.3.4.2</ecNumber>
    </recommendedName>
    <alternativeName>
        <fullName evidence="1">Cytidine 5'-triphosphate synthase</fullName>
    </alternativeName>
    <alternativeName>
        <fullName evidence="1">Cytidine triphosphate synthetase</fullName>
        <shortName evidence="1">CTP synthetase</shortName>
        <shortName evidence="1">CTPS</shortName>
    </alternativeName>
    <alternativeName>
        <fullName evidence="1">UTP--ammonia ligase</fullName>
    </alternativeName>
</protein>